<proteinExistence type="inferred from homology"/>
<accession>Q6G9S1</accession>
<reference key="1">
    <citation type="journal article" date="2004" name="Proc. Natl. Acad. Sci. U.S.A.">
        <title>Complete genomes of two clinical Staphylococcus aureus strains: evidence for the rapid evolution of virulence and drug resistance.</title>
        <authorList>
            <person name="Holden M.T.G."/>
            <person name="Feil E.J."/>
            <person name="Lindsay J.A."/>
            <person name="Peacock S.J."/>
            <person name="Day N.P.J."/>
            <person name="Enright M.C."/>
            <person name="Foster T.J."/>
            <person name="Moore C.E."/>
            <person name="Hurst L."/>
            <person name="Atkin R."/>
            <person name="Barron A."/>
            <person name="Bason N."/>
            <person name="Bentley S.D."/>
            <person name="Chillingworth C."/>
            <person name="Chillingworth T."/>
            <person name="Churcher C."/>
            <person name="Clark L."/>
            <person name="Corton C."/>
            <person name="Cronin A."/>
            <person name="Doggett J."/>
            <person name="Dowd L."/>
            <person name="Feltwell T."/>
            <person name="Hance Z."/>
            <person name="Harris B."/>
            <person name="Hauser H."/>
            <person name="Holroyd S."/>
            <person name="Jagels K."/>
            <person name="James K.D."/>
            <person name="Lennard N."/>
            <person name="Line A."/>
            <person name="Mayes R."/>
            <person name="Moule S."/>
            <person name="Mungall K."/>
            <person name="Ormond D."/>
            <person name="Quail M.A."/>
            <person name="Rabbinowitsch E."/>
            <person name="Rutherford K.M."/>
            <person name="Sanders M."/>
            <person name="Sharp S."/>
            <person name="Simmonds M."/>
            <person name="Stevens K."/>
            <person name="Whitehead S."/>
            <person name="Barrell B.G."/>
            <person name="Spratt B.G."/>
            <person name="Parkhill J."/>
        </authorList>
    </citation>
    <scope>NUCLEOTIDE SEQUENCE [LARGE SCALE GENOMIC DNA]</scope>
    <source>
        <strain>MSSA476</strain>
    </source>
</reference>
<feature type="chain" id="PRO_0000374569" description="tRNA-2-methylthio-N(6)-dimethylallyladenosine synthase">
    <location>
        <begin position="1"/>
        <end position="514"/>
    </location>
</feature>
<feature type="domain" description="MTTase N-terminal" evidence="1">
    <location>
        <begin position="68"/>
        <end position="186"/>
    </location>
</feature>
<feature type="domain" description="Radical SAM core" evidence="2">
    <location>
        <begin position="209"/>
        <end position="440"/>
    </location>
</feature>
<feature type="domain" description="TRAM" evidence="1">
    <location>
        <begin position="442"/>
        <end position="505"/>
    </location>
</feature>
<feature type="region of interest" description="Disordered" evidence="3">
    <location>
        <begin position="1"/>
        <end position="21"/>
    </location>
</feature>
<feature type="binding site" evidence="1">
    <location>
        <position position="77"/>
    </location>
    <ligand>
        <name>[4Fe-4S] cluster</name>
        <dbReference type="ChEBI" id="CHEBI:49883"/>
        <label>1</label>
    </ligand>
</feature>
<feature type="binding site" evidence="1">
    <location>
        <position position="113"/>
    </location>
    <ligand>
        <name>[4Fe-4S] cluster</name>
        <dbReference type="ChEBI" id="CHEBI:49883"/>
        <label>1</label>
    </ligand>
</feature>
<feature type="binding site" evidence="1">
    <location>
        <position position="147"/>
    </location>
    <ligand>
        <name>[4Fe-4S] cluster</name>
        <dbReference type="ChEBI" id="CHEBI:49883"/>
        <label>1</label>
    </ligand>
</feature>
<feature type="binding site" evidence="1">
    <location>
        <position position="223"/>
    </location>
    <ligand>
        <name>[4Fe-4S] cluster</name>
        <dbReference type="ChEBI" id="CHEBI:49883"/>
        <label>2</label>
        <note>4Fe-4S-S-AdoMet</note>
    </ligand>
</feature>
<feature type="binding site" evidence="1">
    <location>
        <position position="227"/>
    </location>
    <ligand>
        <name>[4Fe-4S] cluster</name>
        <dbReference type="ChEBI" id="CHEBI:49883"/>
        <label>2</label>
        <note>4Fe-4S-S-AdoMet</note>
    </ligand>
</feature>
<feature type="binding site" evidence="1">
    <location>
        <position position="230"/>
    </location>
    <ligand>
        <name>[4Fe-4S] cluster</name>
        <dbReference type="ChEBI" id="CHEBI:49883"/>
        <label>2</label>
        <note>4Fe-4S-S-AdoMet</note>
    </ligand>
</feature>
<keyword id="KW-0004">4Fe-4S</keyword>
<keyword id="KW-0963">Cytoplasm</keyword>
<keyword id="KW-0408">Iron</keyword>
<keyword id="KW-0411">Iron-sulfur</keyword>
<keyword id="KW-0479">Metal-binding</keyword>
<keyword id="KW-0949">S-adenosyl-L-methionine</keyword>
<keyword id="KW-0808">Transferase</keyword>
<keyword id="KW-0819">tRNA processing</keyword>
<evidence type="ECO:0000255" key="1">
    <source>
        <dbReference type="HAMAP-Rule" id="MF_01864"/>
    </source>
</evidence>
<evidence type="ECO:0000255" key="2">
    <source>
        <dbReference type="PROSITE-ProRule" id="PRU01266"/>
    </source>
</evidence>
<evidence type="ECO:0000256" key="3">
    <source>
        <dbReference type="SAM" id="MobiDB-lite"/>
    </source>
</evidence>
<organism>
    <name type="scientific">Staphylococcus aureus (strain MSSA476)</name>
    <dbReference type="NCBI Taxonomy" id="282459"/>
    <lineage>
        <taxon>Bacteria</taxon>
        <taxon>Bacillati</taxon>
        <taxon>Bacillota</taxon>
        <taxon>Bacilli</taxon>
        <taxon>Bacillales</taxon>
        <taxon>Staphylococcaceae</taxon>
        <taxon>Staphylococcus</taxon>
    </lineage>
</organism>
<comment type="function">
    <text evidence="1">Catalyzes the methylthiolation of N6-(dimethylallyl)adenosine (i(6)A), leading to the formation of 2-methylthio-N6-(dimethylallyl)adenosine (ms(2)i(6)A) at position 37 in tRNAs that read codons beginning with uridine.</text>
</comment>
<comment type="catalytic activity">
    <reaction evidence="1">
        <text>N(6)-dimethylallyladenosine(37) in tRNA + (sulfur carrier)-SH + AH2 + 2 S-adenosyl-L-methionine = 2-methylsulfanyl-N(6)-dimethylallyladenosine(37) in tRNA + (sulfur carrier)-H + 5'-deoxyadenosine + L-methionine + A + S-adenosyl-L-homocysteine + 2 H(+)</text>
        <dbReference type="Rhea" id="RHEA:37067"/>
        <dbReference type="Rhea" id="RHEA-COMP:10375"/>
        <dbReference type="Rhea" id="RHEA-COMP:10376"/>
        <dbReference type="Rhea" id="RHEA-COMP:14737"/>
        <dbReference type="Rhea" id="RHEA-COMP:14739"/>
        <dbReference type="ChEBI" id="CHEBI:13193"/>
        <dbReference type="ChEBI" id="CHEBI:15378"/>
        <dbReference type="ChEBI" id="CHEBI:17319"/>
        <dbReference type="ChEBI" id="CHEBI:17499"/>
        <dbReference type="ChEBI" id="CHEBI:29917"/>
        <dbReference type="ChEBI" id="CHEBI:57844"/>
        <dbReference type="ChEBI" id="CHEBI:57856"/>
        <dbReference type="ChEBI" id="CHEBI:59789"/>
        <dbReference type="ChEBI" id="CHEBI:64428"/>
        <dbReference type="ChEBI" id="CHEBI:74415"/>
        <dbReference type="ChEBI" id="CHEBI:74417"/>
        <dbReference type="EC" id="2.8.4.3"/>
    </reaction>
</comment>
<comment type="cofactor">
    <cofactor evidence="1">
        <name>[4Fe-4S] cluster</name>
        <dbReference type="ChEBI" id="CHEBI:49883"/>
    </cofactor>
    <text evidence="1">Binds 2 [4Fe-4S] clusters. One cluster is coordinated with 3 cysteines and an exchangeable S-adenosyl-L-methionine.</text>
</comment>
<comment type="subunit">
    <text evidence="1">Monomer.</text>
</comment>
<comment type="subcellular location">
    <subcellularLocation>
        <location evidence="1">Cytoplasm</location>
    </subcellularLocation>
</comment>
<comment type="similarity">
    <text evidence="1">Belongs to the methylthiotransferase family. MiaB subfamily.</text>
</comment>
<dbReference type="EC" id="2.8.4.3" evidence="1"/>
<dbReference type="EMBL" id="BX571857">
    <property type="protein sequence ID" value="CAG43003.1"/>
    <property type="molecule type" value="Genomic_DNA"/>
</dbReference>
<dbReference type="RefSeq" id="WP_001001524.1">
    <property type="nucleotide sequence ID" value="NC_002953.3"/>
</dbReference>
<dbReference type="SMR" id="Q6G9S1"/>
<dbReference type="KEGG" id="sas:SAS1226"/>
<dbReference type="HOGENOM" id="CLU_018697_2_0_9"/>
<dbReference type="GO" id="GO:0005829">
    <property type="term" value="C:cytosol"/>
    <property type="evidence" value="ECO:0007669"/>
    <property type="project" value="TreeGrafter"/>
</dbReference>
<dbReference type="GO" id="GO:0051539">
    <property type="term" value="F:4 iron, 4 sulfur cluster binding"/>
    <property type="evidence" value="ECO:0007669"/>
    <property type="project" value="UniProtKB-UniRule"/>
</dbReference>
<dbReference type="GO" id="GO:0046872">
    <property type="term" value="F:metal ion binding"/>
    <property type="evidence" value="ECO:0007669"/>
    <property type="project" value="UniProtKB-KW"/>
</dbReference>
<dbReference type="GO" id="GO:0035597">
    <property type="term" value="F:N6-isopentenyladenosine methylthiotransferase activity"/>
    <property type="evidence" value="ECO:0007669"/>
    <property type="project" value="TreeGrafter"/>
</dbReference>
<dbReference type="CDD" id="cd01335">
    <property type="entry name" value="Radical_SAM"/>
    <property type="match status" value="1"/>
</dbReference>
<dbReference type="FunFam" id="3.40.50.12160:FF:000006">
    <property type="entry name" value="tRNA-2-methylthio-N(6)-dimethylallyladenosine synthase"/>
    <property type="match status" value="1"/>
</dbReference>
<dbReference type="FunFam" id="3.80.30.20:FF:000001">
    <property type="entry name" value="tRNA-2-methylthio-N(6)-dimethylallyladenosine synthase 2"/>
    <property type="match status" value="1"/>
</dbReference>
<dbReference type="Gene3D" id="3.40.50.12160">
    <property type="entry name" value="Methylthiotransferase, N-terminal domain"/>
    <property type="match status" value="1"/>
</dbReference>
<dbReference type="Gene3D" id="3.80.30.20">
    <property type="entry name" value="tm_1862 like domain"/>
    <property type="match status" value="1"/>
</dbReference>
<dbReference type="HAMAP" id="MF_01864">
    <property type="entry name" value="tRNA_metthiotr_MiaB"/>
    <property type="match status" value="1"/>
</dbReference>
<dbReference type="InterPro" id="IPR006638">
    <property type="entry name" value="Elp3/MiaA/NifB-like_rSAM"/>
</dbReference>
<dbReference type="InterPro" id="IPR005839">
    <property type="entry name" value="Methylthiotransferase"/>
</dbReference>
<dbReference type="InterPro" id="IPR020612">
    <property type="entry name" value="Methylthiotransferase_CS"/>
</dbReference>
<dbReference type="InterPro" id="IPR013848">
    <property type="entry name" value="Methylthiotransferase_N"/>
</dbReference>
<dbReference type="InterPro" id="IPR038135">
    <property type="entry name" value="Methylthiotransferase_N_sf"/>
</dbReference>
<dbReference type="InterPro" id="IPR006463">
    <property type="entry name" value="MiaB_methiolase"/>
</dbReference>
<dbReference type="InterPro" id="IPR007197">
    <property type="entry name" value="rSAM"/>
</dbReference>
<dbReference type="InterPro" id="IPR023404">
    <property type="entry name" value="rSAM_horseshoe"/>
</dbReference>
<dbReference type="InterPro" id="IPR002792">
    <property type="entry name" value="TRAM_dom"/>
</dbReference>
<dbReference type="NCBIfam" id="TIGR01574">
    <property type="entry name" value="miaB-methiolase"/>
    <property type="match status" value="1"/>
</dbReference>
<dbReference type="NCBIfam" id="TIGR00089">
    <property type="entry name" value="MiaB/RimO family radical SAM methylthiotransferase"/>
    <property type="match status" value="1"/>
</dbReference>
<dbReference type="PANTHER" id="PTHR43020">
    <property type="entry name" value="CDK5 REGULATORY SUBUNIT-ASSOCIATED PROTEIN 1"/>
    <property type="match status" value="1"/>
</dbReference>
<dbReference type="PANTHER" id="PTHR43020:SF2">
    <property type="entry name" value="MITOCHONDRIAL TRNA METHYLTHIOTRANSFERASE CDK5RAP1"/>
    <property type="match status" value="1"/>
</dbReference>
<dbReference type="Pfam" id="PF04055">
    <property type="entry name" value="Radical_SAM"/>
    <property type="match status" value="1"/>
</dbReference>
<dbReference type="Pfam" id="PF01938">
    <property type="entry name" value="TRAM"/>
    <property type="match status" value="1"/>
</dbReference>
<dbReference type="Pfam" id="PF00919">
    <property type="entry name" value="UPF0004"/>
    <property type="match status" value="1"/>
</dbReference>
<dbReference type="SFLD" id="SFLDF00273">
    <property type="entry name" value="(dimethylallyl)adenosine_tRNA"/>
    <property type="match status" value="1"/>
</dbReference>
<dbReference type="SFLD" id="SFLDG01082">
    <property type="entry name" value="B12-binding_domain_containing"/>
    <property type="match status" value="1"/>
</dbReference>
<dbReference type="SFLD" id="SFLDS00029">
    <property type="entry name" value="Radical_SAM"/>
    <property type="match status" value="1"/>
</dbReference>
<dbReference type="SMART" id="SM00729">
    <property type="entry name" value="Elp3"/>
    <property type="match status" value="1"/>
</dbReference>
<dbReference type="SUPFAM" id="SSF102114">
    <property type="entry name" value="Radical SAM enzymes"/>
    <property type="match status" value="1"/>
</dbReference>
<dbReference type="PROSITE" id="PS51449">
    <property type="entry name" value="MTTASE_N"/>
    <property type="match status" value="1"/>
</dbReference>
<dbReference type="PROSITE" id="PS01278">
    <property type="entry name" value="MTTASE_RADICAL"/>
    <property type="match status" value="1"/>
</dbReference>
<dbReference type="PROSITE" id="PS51918">
    <property type="entry name" value="RADICAL_SAM"/>
    <property type="match status" value="1"/>
</dbReference>
<dbReference type="PROSITE" id="PS50926">
    <property type="entry name" value="TRAM"/>
    <property type="match status" value="1"/>
</dbReference>
<gene>
    <name evidence="1" type="primary">miaB</name>
    <name type="ordered locus">SAS1226</name>
</gene>
<sequence>MNEEQRKASSVDVLAERDKKAEKDYSKYFEHVYQPPNLKEAKKRGKQEVRYNRDFQIDEKYRGMGNERTFLIKTYGCQMNAHDTEVIAGILEALGYQATTDINTADVILINTCAIRENAENKVFSEIGNLKHLKKERPDILIGVCGCMSQEESVVNKILKSYQNVDMIFGTHNIHHLPEILEEAYLSKAMVVEVWSKEGDVIENLPKVREGNIKAWVNIMYGCDKFCTYCIVPFTRGKERSRRPEDIIDEVRELAREGYKEITLLGQNVNSYGKDLQDIEYDLGDLLQAISKIAIPRVRFTTSHPWDFTDHMIDVISEGGNIVPHIHLPVQSGNNAVLKIMGRKYTRESYLDLVKRIKDRIPNVALTTDIIVGYPNESEEQFEETLTLYDEVGFEHAYTYLYSQRDGTPAAKMKDNVPLNVKKERLQRLNKKVGHYSQIAMSKYEGQTVTVLCEGSSKKDDQVLAGYTDKNKLVNFKAPKEMIGKLVEVRIDEAKQYSLNGSFVKEVEPEMVIQ</sequence>
<name>MIAB_STAAS</name>
<protein>
    <recommendedName>
        <fullName evidence="1">tRNA-2-methylthio-N(6)-dimethylallyladenosine synthase</fullName>
        <ecNumber evidence="1">2.8.4.3</ecNumber>
    </recommendedName>
    <alternativeName>
        <fullName evidence="1">(Dimethylallyl)adenosine tRNA methylthiotransferase MiaB</fullName>
    </alternativeName>
    <alternativeName>
        <fullName evidence="1">tRNA-i(6)A37 methylthiotransferase</fullName>
    </alternativeName>
</protein>